<accession>B7ND53</accession>
<keyword id="KW-0012">Acyltransferase</keyword>
<keyword id="KW-0963">Cytoplasm</keyword>
<keyword id="KW-0408">Iron</keyword>
<keyword id="KW-0479">Metal-binding</keyword>
<keyword id="KW-0808">Transferase</keyword>
<keyword id="KW-0819">tRNA processing</keyword>
<organism>
    <name type="scientific">Escherichia coli O17:K52:H18 (strain UMN026 / ExPEC)</name>
    <dbReference type="NCBI Taxonomy" id="585056"/>
    <lineage>
        <taxon>Bacteria</taxon>
        <taxon>Pseudomonadati</taxon>
        <taxon>Pseudomonadota</taxon>
        <taxon>Gammaproteobacteria</taxon>
        <taxon>Enterobacterales</taxon>
        <taxon>Enterobacteriaceae</taxon>
        <taxon>Escherichia</taxon>
    </lineage>
</organism>
<comment type="function">
    <text evidence="1">Required for the formation of a threonylcarbamoyl group on adenosine at position 37 (t(6)A37) in tRNAs that read codons beginning with adenine. Is involved in the transfer of the threonylcarbamoyl moiety of threonylcarbamoyl-AMP (TC-AMP) to the N6 group of A37, together with TsaE and TsaB. TsaD likely plays a direct catalytic role in this reaction.</text>
</comment>
<comment type="catalytic activity">
    <reaction evidence="1">
        <text>L-threonylcarbamoyladenylate + adenosine(37) in tRNA = N(6)-L-threonylcarbamoyladenosine(37) in tRNA + AMP + H(+)</text>
        <dbReference type="Rhea" id="RHEA:37059"/>
        <dbReference type="Rhea" id="RHEA-COMP:10162"/>
        <dbReference type="Rhea" id="RHEA-COMP:10163"/>
        <dbReference type="ChEBI" id="CHEBI:15378"/>
        <dbReference type="ChEBI" id="CHEBI:73682"/>
        <dbReference type="ChEBI" id="CHEBI:74411"/>
        <dbReference type="ChEBI" id="CHEBI:74418"/>
        <dbReference type="ChEBI" id="CHEBI:456215"/>
        <dbReference type="EC" id="2.3.1.234"/>
    </reaction>
</comment>
<comment type="cofactor">
    <cofactor evidence="1">
        <name>Fe(2+)</name>
        <dbReference type="ChEBI" id="CHEBI:29033"/>
    </cofactor>
    <text evidence="1">Binds 1 Fe(2+) ion per subunit.</text>
</comment>
<comment type="subcellular location">
    <subcellularLocation>
        <location evidence="1">Cytoplasm</location>
    </subcellularLocation>
</comment>
<comment type="similarity">
    <text evidence="1">Belongs to the KAE1 / TsaD family.</text>
</comment>
<protein>
    <recommendedName>
        <fullName evidence="1">tRNA N6-adenosine threonylcarbamoyltransferase</fullName>
        <ecNumber evidence="1">2.3.1.234</ecNumber>
    </recommendedName>
    <alternativeName>
        <fullName evidence="1">N6-L-threonylcarbamoyladenine synthase</fullName>
        <shortName evidence="1">t(6)A synthase</shortName>
    </alternativeName>
    <alternativeName>
        <fullName evidence="1">t(6)A37 threonylcarbamoyladenosine biosynthesis protein TsaD</fullName>
    </alternativeName>
    <alternativeName>
        <fullName evidence="1">tRNA threonylcarbamoyladenosine biosynthesis protein TsaD</fullName>
    </alternativeName>
</protein>
<feature type="chain" id="PRO_1000145979" description="tRNA N6-adenosine threonylcarbamoyltransferase">
    <location>
        <begin position="1"/>
        <end position="337"/>
    </location>
</feature>
<feature type="binding site" evidence="1">
    <location>
        <position position="111"/>
    </location>
    <ligand>
        <name>Fe cation</name>
        <dbReference type="ChEBI" id="CHEBI:24875"/>
    </ligand>
</feature>
<feature type="binding site" evidence="1">
    <location>
        <position position="115"/>
    </location>
    <ligand>
        <name>Fe cation</name>
        <dbReference type="ChEBI" id="CHEBI:24875"/>
    </ligand>
</feature>
<feature type="binding site" evidence="1">
    <location>
        <begin position="134"/>
        <end position="138"/>
    </location>
    <ligand>
        <name>substrate</name>
    </ligand>
</feature>
<feature type="binding site" evidence="1">
    <location>
        <position position="167"/>
    </location>
    <ligand>
        <name>substrate</name>
    </ligand>
</feature>
<feature type="binding site" evidence="1">
    <location>
        <position position="180"/>
    </location>
    <ligand>
        <name>substrate</name>
    </ligand>
</feature>
<feature type="binding site" evidence="1">
    <location>
        <position position="272"/>
    </location>
    <ligand>
        <name>substrate</name>
    </ligand>
</feature>
<feature type="binding site" evidence="1">
    <location>
        <position position="300"/>
    </location>
    <ligand>
        <name>Fe cation</name>
        <dbReference type="ChEBI" id="CHEBI:24875"/>
    </ligand>
</feature>
<name>TSAD_ECOLU</name>
<sequence>MRVLGIETSCDETGIAIYDDEKGLLANQLYSQVKLHADYGGVVPELASRDHVRKTVPLIQAALKESGLTAKDIDAVAYTAGPGLVGALLVGATVGRSLAFAWDVPAIPVHHMEGHLLAPMLEDNPPEFPFVALLVSGGHTQLISVTGIGQYELLGESIDDAAGEAFDKTAKLLGLDYPGGPLLSKMAAQGTAGRFVFPRPMTDRPGLDFSFSGLKTFAANTIRDNGTDDQTRADIARAFEDAVVDTLMIKCKRALDQTGFKRLVMAGGVSANRTLRAKLAEMMKKRRGEVFYARPEFCTDNGAMIAYAGMVRFKAGATADLGVSVRPRWPLAELPAA</sequence>
<reference key="1">
    <citation type="journal article" date="2009" name="PLoS Genet.">
        <title>Organised genome dynamics in the Escherichia coli species results in highly diverse adaptive paths.</title>
        <authorList>
            <person name="Touchon M."/>
            <person name="Hoede C."/>
            <person name="Tenaillon O."/>
            <person name="Barbe V."/>
            <person name="Baeriswyl S."/>
            <person name="Bidet P."/>
            <person name="Bingen E."/>
            <person name="Bonacorsi S."/>
            <person name="Bouchier C."/>
            <person name="Bouvet O."/>
            <person name="Calteau A."/>
            <person name="Chiapello H."/>
            <person name="Clermont O."/>
            <person name="Cruveiller S."/>
            <person name="Danchin A."/>
            <person name="Diard M."/>
            <person name="Dossat C."/>
            <person name="Karoui M.E."/>
            <person name="Frapy E."/>
            <person name="Garry L."/>
            <person name="Ghigo J.M."/>
            <person name="Gilles A.M."/>
            <person name="Johnson J."/>
            <person name="Le Bouguenec C."/>
            <person name="Lescat M."/>
            <person name="Mangenot S."/>
            <person name="Martinez-Jehanne V."/>
            <person name="Matic I."/>
            <person name="Nassif X."/>
            <person name="Oztas S."/>
            <person name="Petit M.A."/>
            <person name="Pichon C."/>
            <person name="Rouy Z."/>
            <person name="Ruf C.S."/>
            <person name="Schneider D."/>
            <person name="Tourret J."/>
            <person name="Vacherie B."/>
            <person name="Vallenet D."/>
            <person name="Medigue C."/>
            <person name="Rocha E.P.C."/>
            <person name="Denamur E."/>
        </authorList>
    </citation>
    <scope>NUCLEOTIDE SEQUENCE [LARGE SCALE GENOMIC DNA]</scope>
    <source>
        <strain>UMN026 / ExPEC</strain>
    </source>
</reference>
<dbReference type="EC" id="2.3.1.234" evidence="1"/>
<dbReference type="EMBL" id="CU928163">
    <property type="protein sequence ID" value="CAR14703.1"/>
    <property type="molecule type" value="Genomic_DNA"/>
</dbReference>
<dbReference type="RefSeq" id="WP_001264352.1">
    <property type="nucleotide sequence ID" value="NC_011751.1"/>
</dbReference>
<dbReference type="RefSeq" id="YP_002414208.1">
    <property type="nucleotide sequence ID" value="NC_011751.1"/>
</dbReference>
<dbReference type="SMR" id="B7ND53"/>
<dbReference type="STRING" id="585056.ECUMN_3547"/>
<dbReference type="GeneID" id="75173186"/>
<dbReference type="KEGG" id="eum:ECUMN_3547"/>
<dbReference type="PATRIC" id="fig|585056.7.peg.3722"/>
<dbReference type="HOGENOM" id="CLU_023208_0_2_6"/>
<dbReference type="Proteomes" id="UP000007097">
    <property type="component" value="Chromosome"/>
</dbReference>
<dbReference type="GO" id="GO:0005737">
    <property type="term" value="C:cytoplasm"/>
    <property type="evidence" value="ECO:0007669"/>
    <property type="project" value="UniProtKB-SubCell"/>
</dbReference>
<dbReference type="GO" id="GO:0005506">
    <property type="term" value="F:iron ion binding"/>
    <property type="evidence" value="ECO:0007669"/>
    <property type="project" value="UniProtKB-UniRule"/>
</dbReference>
<dbReference type="GO" id="GO:0061711">
    <property type="term" value="F:N(6)-L-threonylcarbamoyladenine synthase activity"/>
    <property type="evidence" value="ECO:0007669"/>
    <property type="project" value="UniProtKB-EC"/>
</dbReference>
<dbReference type="GO" id="GO:0002949">
    <property type="term" value="P:tRNA threonylcarbamoyladenosine modification"/>
    <property type="evidence" value="ECO:0007669"/>
    <property type="project" value="UniProtKB-UniRule"/>
</dbReference>
<dbReference type="CDD" id="cd24097">
    <property type="entry name" value="ASKHA_NBD_TsaD-like"/>
    <property type="match status" value="1"/>
</dbReference>
<dbReference type="FunFam" id="3.30.420.40:FF:000031">
    <property type="entry name" value="tRNA N6-adenosine threonylcarbamoyltransferase"/>
    <property type="match status" value="1"/>
</dbReference>
<dbReference type="Gene3D" id="3.30.420.40">
    <property type="match status" value="2"/>
</dbReference>
<dbReference type="HAMAP" id="MF_01445">
    <property type="entry name" value="TsaD"/>
    <property type="match status" value="1"/>
</dbReference>
<dbReference type="InterPro" id="IPR043129">
    <property type="entry name" value="ATPase_NBD"/>
</dbReference>
<dbReference type="InterPro" id="IPR000905">
    <property type="entry name" value="Gcp-like_dom"/>
</dbReference>
<dbReference type="InterPro" id="IPR017861">
    <property type="entry name" value="KAE1/TsaD"/>
</dbReference>
<dbReference type="InterPro" id="IPR017860">
    <property type="entry name" value="Peptidase_M22_CS"/>
</dbReference>
<dbReference type="InterPro" id="IPR022450">
    <property type="entry name" value="TsaD"/>
</dbReference>
<dbReference type="NCBIfam" id="TIGR00329">
    <property type="entry name" value="gcp_kae1"/>
    <property type="match status" value="1"/>
</dbReference>
<dbReference type="NCBIfam" id="TIGR03723">
    <property type="entry name" value="T6A_TsaD_YgjD"/>
    <property type="match status" value="1"/>
</dbReference>
<dbReference type="PANTHER" id="PTHR11735">
    <property type="entry name" value="TRNA N6-ADENOSINE THREONYLCARBAMOYLTRANSFERASE"/>
    <property type="match status" value="1"/>
</dbReference>
<dbReference type="PANTHER" id="PTHR11735:SF6">
    <property type="entry name" value="TRNA N6-ADENOSINE THREONYLCARBAMOYLTRANSFERASE, MITOCHONDRIAL"/>
    <property type="match status" value="1"/>
</dbReference>
<dbReference type="Pfam" id="PF00814">
    <property type="entry name" value="TsaD"/>
    <property type="match status" value="1"/>
</dbReference>
<dbReference type="PRINTS" id="PR00789">
    <property type="entry name" value="OSIALOPTASE"/>
</dbReference>
<dbReference type="SUPFAM" id="SSF53067">
    <property type="entry name" value="Actin-like ATPase domain"/>
    <property type="match status" value="1"/>
</dbReference>
<dbReference type="PROSITE" id="PS01016">
    <property type="entry name" value="GLYCOPROTEASE"/>
    <property type="match status" value="1"/>
</dbReference>
<gene>
    <name evidence="1" type="primary">tsaD</name>
    <name type="synonym">gcp</name>
    <name type="ordered locus">ECUMN_3547</name>
</gene>
<proteinExistence type="inferred from homology"/>
<evidence type="ECO:0000255" key="1">
    <source>
        <dbReference type="HAMAP-Rule" id="MF_01445"/>
    </source>
</evidence>